<evidence type="ECO:0000255" key="1">
    <source>
        <dbReference type="HAMAP-Rule" id="MF_00230"/>
    </source>
</evidence>
<gene>
    <name evidence="1" type="primary">cobT</name>
    <name type="ordered locus">SARI_00872</name>
</gene>
<comment type="function">
    <text evidence="1">Catalyzes the synthesis of alpha-ribazole-5'-phosphate from nicotinate mononucleotide (NAMN) and 5,6-dimethylbenzimidazole (DMB).</text>
</comment>
<comment type="catalytic activity">
    <reaction evidence="1">
        <text>5,6-dimethylbenzimidazole + nicotinate beta-D-ribonucleotide = alpha-ribazole 5'-phosphate + nicotinate + H(+)</text>
        <dbReference type="Rhea" id="RHEA:11196"/>
        <dbReference type="ChEBI" id="CHEBI:15378"/>
        <dbReference type="ChEBI" id="CHEBI:15890"/>
        <dbReference type="ChEBI" id="CHEBI:32544"/>
        <dbReference type="ChEBI" id="CHEBI:57502"/>
        <dbReference type="ChEBI" id="CHEBI:57918"/>
        <dbReference type="EC" id="2.4.2.21"/>
    </reaction>
</comment>
<comment type="pathway">
    <text evidence="1">Nucleoside biosynthesis; alpha-ribazole biosynthesis; alpha-ribazole from 5,6-dimethylbenzimidazole: step 1/2.</text>
</comment>
<comment type="subunit">
    <text evidence="1">Homodimer.</text>
</comment>
<comment type="similarity">
    <text evidence="1">Belongs to the CobT family.</text>
</comment>
<protein>
    <recommendedName>
        <fullName evidence="1">Nicotinate-nucleotide--dimethylbenzimidazole phosphoribosyltransferase</fullName>
        <shortName evidence="1">NN:DBI PRT</shortName>
        <ecNumber evidence="1">2.4.2.21</ecNumber>
    </recommendedName>
    <alternativeName>
        <fullName evidence="1">N(1)-alpha-phosphoribosyltransferase</fullName>
    </alternativeName>
</protein>
<keyword id="KW-0169">Cobalamin biosynthesis</keyword>
<keyword id="KW-0328">Glycosyltransferase</keyword>
<keyword id="KW-1185">Reference proteome</keyword>
<keyword id="KW-0808">Transferase</keyword>
<dbReference type="EC" id="2.4.2.21" evidence="1"/>
<dbReference type="EMBL" id="CP000880">
    <property type="protein sequence ID" value="ABX20791.1"/>
    <property type="molecule type" value="Genomic_DNA"/>
</dbReference>
<dbReference type="SMR" id="A9MLS8"/>
<dbReference type="STRING" id="41514.SARI_00872"/>
<dbReference type="KEGG" id="ses:SARI_00872"/>
<dbReference type="HOGENOM" id="CLU_002982_0_0_6"/>
<dbReference type="UniPathway" id="UPA00061">
    <property type="reaction ID" value="UER00516"/>
</dbReference>
<dbReference type="Proteomes" id="UP000002084">
    <property type="component" value="Chromosome"/>
</dbReference>
<dbReference type="GO" id="GO:0008939">
    <property type="term" value="F:nicotinate-nucleotide-dimethylbenzimidazole phosphoribosyltransferase activity"/>
    <property type="evidence" value="ECO:0007669"/>
    <property type="project" value="UniProtKB-UniRule"/>
</dbReference>
<dbReference type="GO" id="GO:0009236">
    <property type="term" value="P:cobalamin biosynthetic process"/>
    <property type="evidence" value="ECO:0007669"/>
    <property type="project" value="UniProtKB-KW"/>
</dbReference>
<dbReference type="CDD" id="cd02439">
    <property type="entry name" value="DMB-PRT_CobT"/>
    <property type="match status" value="1"/>
</dbReference>
<dbReference type="FunFam" id="1.10.1610.10:FF:000001">
    <property type="entry name" value="Nicotinate-nucleotide--dimethylbenzimidazole phosphoribosyltransferase"/>
    <property type="match status" value="1"/>
</dbReference>
<dbReference type="FunFam" id="3.40.50.10210:FF:000001">
    <property type="entry name" value="Nicotinate-nucleotide--dimethylbenzimidazole phosphoribosyltransferase"/>
    <property type="match status" value="1"/>
</dbReference>
<dbReference type="Gene3D" id="1.10.1610.10">
    <property type="match status" value="1"/>
</dbReference>
<dbReference type="Gene3D" id="3.40.50.10210">
    <property type="match status" value="1"/>
</dbReference>
<dbReference type="HAMAP" id="MF_00230">
    <property type="entry name" value="CobT"/>
    <property type="match status" value="1"/>
</dbReference>
<dbReference type="InterPro" id="IPR003200">
    <property type="entry name" value="Nict_dMeBzImd_PRibTrfase"/>
</dbReference>
<dbReference type="InterPro" id="IPR017846">
    <property type="entry name" value="Nict_dMeBzImd_PRibTrfase_bact"/>
</dbReference>
<dbReference type="InterPro" id="IPR023195">
    <property type="entry name" value="Nict_dMeBzImd_PRibTrfase_N"/>
</dbReference>
<dbReference type="InterPro" id="IPR036087">
    <property type="entry name" value="Nict_dMeBzImd_PRibTrfase_sf"/>
</dbReference>
<dbReference type="NCBIfam" id="TIGR03160">
    <property type="entry name" value="cobT_DBIPRT"/>
    <property type="match status" value="1"/>
</dbReference>
<dbReference type="NCBIfam" id="NF000996">
    <property type="entry name" value="PRK00105.1"/>
    <property type="match status" value="1"/>
</dbReference>
<dbReference type="PANTHER" id="PTHR43463">
    <property type="entry name" value="NICOTINATE-NUCLEOTIDE--DIMETHYLBENZIMIDAZOLE PHOSPHORIBOSYLTRANSFERASE"/>
    <property type="match status" value="1"/>
</dbReference>
<dbReference type="PANTHER" id="PTHR43463:SF1">
    <property type="entry name" value="NICOTINATE-NUCLEOTIDE--DIMETHYLBENZIMIDAZOLE PHOSPHORIBOSYLTRANSFERASE"/>
    <property type="match status" value="1"/>
</dbReference>
<dbReference type="Pfam" id="PF02277">
    <property type="entry name" value="DBI_PRT"/>
    <property type="match status" value="1"/>
</dbReference>
<dbReference type="SUPFAM" id="SSF52733">
    <property type="entry name" value="Nicotinate mononucleotide:5,6-dimethylbenzimidazole phosphoribosyltransferase (CobT)"/>
    <property type="match status" value="1"/>
</dbReference>
<accession>A9MLS8</accession>
<sequence length="354" mass="36501">MQTLHALLRDIPAPDTDAMARAQQHIDGLLKPPGSLGRLEALAVQLAGMPGLNGTPQVGEKAMLVMCADHGVWDEGVAVSPKIVTAIQAANMTRGTTGVCVLAAQAGAKVHVIDVGIDAEPIPGVVNMRVARGCGNIAVGPAMSRSQAEVLLLEVIRYTCDLAQRGVTLFGVGELGMANTTPAAAMVSVFTGSDAKEVVGIGANLPPSRIDNKVDVVRRAIAINQPDPHDGIDVLSKVGGFDLVGMTGVMLGAARCGLPVLLDGFLSYSAALAACQIAPAVRSYLIPSHFSAEKGARIALAHLAMEPYLHMAMRLGEGSGAALAMPIVEAACAMFHNMGELAASNIVLPGEKQT</sequence>
<organism>
    <name type="scientific">Salmonella arizonae (strain ATCC BAA-731 / CDC346-86 / RSK2980)</name>
    <dbReference type="NCBI Taxonomy" id="41514"/>
    <lineage>
        <taxon>Bacteria</taxon>
        <taxon>Pseudomonadati</taxon>
        <taxon>Pseudomonadota</taxon>
        <taxon>Gammaproteobacteria</taxon>
        <taxon>Enterobacterales</taxon>
        <taxon>Enterobacteriaceae</taxon>
        <taxon>Salmonella</taxon>
    </lineage>
</organism>
<name>COBT_SALAR</name>
<feature type="chain" id="PRO_1000078247" description="Nicotinate-nucleotide--dimethylbenzimidazole phosphoribosyltransferase">
    <location>
        <begin position="1"/>
        <end position="354"/>
    </location>
</feature>
<feature type="active site" description="Proton acceptor" evidence="1">
    <location>
        <position position="317"/>
    </location>
</feature>
<proteinExistence type="inferred from homology"/>
<reference key="1">
    <citation type="submission" date="2007-11" db="EMBL/GenBank/DDBJ databases">
        <authorList>
            <consortium name="The Salmonella enterica serovar Arizonae Genome Sequencing Project"/>
            <person name="McClelland M."/>
            <person name="Sanderson E.K."/>
            <person name="Porwollik S."/>
            <person name="Spieth J."/>
            <person name="Clifton W.S."/>
            <person name="Fulton R."/>
            <person name="Chunyan W."/>
            <person name="Wollam A."/>
            <person name="Shah N."/>
            <person name="Pepin K."/>
            <person name="Bhonagiri V."/>
            <person name="Nash W."/>
            <person name="Johnson M."/>
            <person name="Thiruvilangam P."/>
            <person name="Wilson R."/>
        </authorList>
    </citation>
    <scope>NUCLEOTIDE SEQUENCE [LARGE SCALE GENOMIC DNA]</scope>
    <source>
        <strain>ATCC BAA-731 / CDC346-86 / RSK2980</strain>
    </source>
</reference>